<accession>A1YGA4</accession>
<protein>
    <recommendedName>
        <fullName>Homeobox protein MOX-1</fullName>
    </recommendedName>
    <alternativeName>
        <fullName>Mesenchyme homeobox 1</fullName>
    </alternativeName>
</protein>
<feature type="chain" id="PRO_0000285455" description="Homeobox protein MOX-1">
    <location>
        <begin position="1"/>
        <end position="254"/>
    </location>
</feature>
<feature type="DNA-binding region" description="Homeobox" evidence="3">
    <location>
        <begin position="171"/>
        <end position="230"/>
    </location>
</feature>
<feature type="region of interest" description="Disordered" evidence="4">
    <location>
        <begin position="87"/>
        <end position="178"/>
    </location>
</feature>
<feature type="region of interest" description="Disordered" evidence="4">
    <location>
        <begin position="227"/>
        <end position="254"/>
    </location>
</feature>
<feature type="compositionally biased region" description="Basic and acidic residues" evidence="4">
    <location>
        <begin position="154"/>
        <end position="178"/>
    </location>
</feature>
<reference key="1">
    <citation type="submission" date="2006-08" db="EMBL/GenBank/DDBJ databases">
        <title>Positive selection in transcription factor genes on the human lineage.</title>
        <authorList>
            <person name="Nickel G.C."/>
            <person name="Tefft D.L."/>
            <person name="Trevarthen K."/>
            <person name="Funt J."/>
            <person name="Adams M.D."/>
        </authorList>
    </citation>
    <scope>NUCLEOTIDE SEQUENCE [GENOMIC DNA]</scope>
</reference>
<sequence length="254" mass="28009">MDPAASSCMRSLQPPAPVWGCLRNPHSEGNGASGLPHYPPTPFSFHQKPDFPATATAAYPDFSASCLAATPHSLPQEEHIFTEQHPVFPQSPNWHFPVSDARRRPNSGPAGGSKEMGTSSLGLVDTTGGPGEDYGVLGSTANETEKKSSRRRKESSDNQENRGKPEGSSKARKERTAFTKEQLRELEAEFAHHNYLTRLRRYEIAVNLDLSERQVKVWFQNRRMKWKRVKGGQPVSPNGQDPEDGDSTASPSSE</sequence>
<gene>
    <name type="primary">MEOX1</name>
</gene>
<proteinExistence type="inferred from homology"/>
<dbReference type="EMBL" id="DQ977248">
    <property type="protein sequence ID" value="ABM54329.1"/>
    <property type="molecule type" value="Genomic_DNA"/>
</dbReference>
<dbReference type="RefSeq" id="XP_003806130.3">
    <property type="nucleotide sequence ID" value="XM_003806082.5"/>
</dbReference>
<dbReference type="SMR" id="A1YGA4"/>
<dbReference type="STRING" id="9597.ENSPPAP00000030702"/>
<dbReference type="Ensembl" id="ENSPPAT00000053565.1">
    <property type="protein sequence ID" value="ENSPPAP00000030702.1"/>
    <property type="gene ID" value="ENSPPAG00000038321.1"/>
</dbReference>
<dbReference type="GeneID" id="100979862"/>
<dbReference type="KEGG" id="pps:100979862"/>
<dbReference type="CTD" id="4222"/>
<dbReference type="eggNOG" id="KOG0489">
    <property type="taxonomic scope" value="Eukaryota"/>
</dbReference>
<dbReference type="GeneTree" id="ENSGT00940000154018"/>
<dbReference type="OMA" id="HAPSILW"/>
<dbReference type="Proteomes" id="UP000240080">
    <property type="component" value="Chromosome 17"/>
</dbReference>
<dbReference type="Bgee" id="ENSPPAG00000038321">
    <property type="expression patterns" value="Expressed in heart and 2 other cell types or tissues"/>
</dbReference>
<dbReference type="GO" id="GO:0005737">
    <property type="term" value="C:cytoplasm"/>
    <property type="evidence" value="ECO:0000250"/>
    <property type="project" value="UniProtKB"/>
</dbReference>
<dbReference type="GO" id="GO:0005634">
    <property type="term" value="C:nucleus"/>
    <property type="evidence" value="ECO:0000250"/>
    <property type="project" value="UniProtKB"/>
</dbReference>
<dbReference type="GO" id="GO:0003682">
    <property type="term" value="F:chromatin binding"/>
    <property type="evidence" value="ECO:0007669"/>
    <property type="project" value="Ensembl"/>
</dbReference>
<dbReference type="GO" id="GO:0001228">
    <property type="term" value="F:DNA-binding transcription activator activity, RNA polymerase II-specific"/>
    <property type="evidence" value="ECO:0007669"/>
    <property type="project" value="Ensembl"/>
</dbReference>
<dbReference type="GO" id="GO:0003700">
    <property type="term" value="F:DNA-binding transcription factor activity"/>
    <property type="evidence" value="ECO:0000250"/>
    <property type="project" value="UniProtKB"/>
</dbReference>
<dbReference type="GO" id="GO:0071837">
    <property type="term" value="F:HMG box domain binding"/>
    <property type="evidence" value="ECO:0007669"/>
    <property type="project" value="Ensembl"/>
</dbReference>
<dbReference type="GO" id="GO:0000978">
    <property type="term" value="F:RNA polymerase II cis-regulatory region sequence-specific DNA binding"/>
    <property type="evidence" value="ECO:0007669"/>
    <property type="project" value="Ensembl"/>
</dbReference>
<dbReference type="GO" id="GO:0043565">
    <property type="term" value="F:sequence-specific DNA binding"/>
    <property type="evidence" value="ECO:0000250"/>
    <property type="project" value="UniProtKB"/>
</dbReference>
<dbReference type="GO" id="GO:0060218">
    <property type="term" value="P:hematopoietic stem cell differentiation"/>
    <property type="evidence" value="ECO:0000250"/>
    <property type="project" value="UniProtKB"/>
</dbReference>
<dbReference type="GO" id="GO:0061056">
    <property type="term" value="P:sclerotome development"/>
    <property type="evidence" value="ECO:0000250"/>
    <property type="project" value="UniProtKB"/>
</dbReference>
<dbReference type="GO" id="GO:0061053">
    <property type="term" value="P:somite development"/>
    <property type="evidence" value="ECO:0000250"/>
    <property type="project" value="UniProtKB"/>
</dbReference>
<dbReference type="GO" id="GO:0001757">
    <property type="term" value="P:somite specification"/>
    <property type="evidence" value="ECO:0007669"/>
    <property type="project" value="Ensembl"/>
</dbReference>
<dbReference type="CDD" id="cd00086">
    <property type="entry name" value="homeodomain"/>
    <property type="match status" value="1"/>
</dbReference>
<dbReference type="FunFam" id="1.10.10.60:FF:000109">
    <property type="entry name" value="Homeobox protein MOX-2"/>
    <property type="match status" value="1"/>
</dbReference>
<dbReference type="Gene3D" id="1.10.10.60">
    <property type="entry name" value="Homeodomain-like"/>
    <property type="match status" value="1"/>
</dbReference>
<dbReference type="InterPro" id="IPR001356">
    <property type="entry name" value="HD"/>
</dbReference>
<dbReference type="InterPro" id="IPR020479">
    <property type="entry name" value="HD_metazoa"/>
</dbReference>
<dbReference type="InterPro" id="IPR017970">
    <property type="entry name" value="Homeobox_CS"/>
</dbReference>
<dbReference type="InterPro" id="IPR009057">
    <property type="entry name" value="Homeodomain-like_sf"/>
</dbReference>
<dbReference type="InterPro" id="IPR042634">
    <property type="entry name" value="MOX-1/MOX-2"/>
</dbReference>
<dbReference type="PANTHER" id="PTHR24328">
    <property type="entry name" value="HOMEOBOX PROTEIN MOX"/>
    <property type="match status" value="1"/>
</dbReference>
<dbReference type="PANTHER" id="PTHR24328:SF8">
    <property type="entry name" value="HOMEOBOX PROTEIN MOX-1"/>
    <property type="match status" value="1"/>
</dbReference>
<dbReference type="Pfam" id="PF00046">
    <property type="entry name" value="Homeodomain"/>
    <property type="match status" value="1"/>
</dbReference>
<dbReference type="PRINTS" id="PR00024">
    <property type="entry name" value="HOMEOBOX"/>
</dbReference>
<dbReference type="SMART" id="SM00389">
    <property type="entry name" value="HOX"/>
    <property type="match status" value="1"/>
</dbReference>
<dbReference type="SUPFAM" id="SSF46689">
    <property type="entry name" value="Homeodomain-like"/>
    <property type="match status" value="1"/>
</dbReference>
<dbReference type="PROSITE" id="PS00027">
    <property type="entry name" value="HOMEOBOX_1"/>
    <property type="match status" value="1"/>
</dbReference>
<dbReference type="PROSITE" id="PS50071">
    <property type="entry name" value="HOMEOBOX_2"/>
    <property type="match status" value="1"/>
</dbReference>
<keyword id="KW-0010">Activator</keyword>
<keyword id="KW-0963">Cytoplasm</keyword>
<keyword id="KW-0217">Developmental protein</keyword>
<keyword id="KW-0238">DNA-binding</keyword>
<keyword id="KW-0371">Homeobox</keyword>
<keyword id="KW-0539">Nucleus</keyword>
<keyword id="KW-1185">Reference proteome</keyword>
<keyword id="KW-0678">Repressor</keyword>
<keyword id="KW-0804">Transcription</keyword>
<keyword id="KW-0805">Transcription regulation</keyword>
<evidence type="ECO:0000250" key="1">
    <source>
        <dbReference type="UniProtKB" id="F1Q4R9"/>
    </source>
</evidence>
<evidence type="ECO:0000250" key="2">
    <source>
        <dbReference type="UniProtKB" id="P32442"/>
    </source>
</evidence>
<evidence type="ECO:0000255" key="3">
    <source>
        <dbReference type="PROSITE-ProRule" id="PRU00108"/>
    </source>
</evidence>
<evidence type="ECO:0000256" key="4">
    <source>
        <dbReference type="SAM" id="MobiDB-lite"/>
    </source>
</evidence>
<organism>
    <name type="scientific">Pan paniscus</name>
    <name type="common">Pygmy chimpanzee</name>
    <name type="synonym">Bonobo</name>
    <dbReference type="NCBI Taxonomy" id="9597"/>
    <lineage>
        <taxon>Eukaryota</taxon>
        <taxon>Metazoa</taxon>
        <taxon>Chordata</taxon>
        <taxon>Craniata</taxon>
        <taxon>Vertebrata</taxon>
        <taxon>Euteleostomi</taxon>
        <taxon>Mammalia</taxon>
        <taxon>Eutheria</taxon>
        <taxon>Euarchontoglires</taxon>
        <taxon>Primates</taxon>
        <taxon>Haplorrhini</taxon>
        <taxon>Catarrhini</taxon>
        <taxon>Hominidae</taxon>
        <taxon>Pan</taxon>
    </lineage>
</organism>
<comment type="function">
    <text evidence="1 2">Mesodermal transcription factor that plays a key role in somitogenesis and is specifically required for sclerotome development. Required for maintenance of the sclerotome polarity and formation of the cranio-cervical joints. Binds specifically to the promoter of target genes and regulates their expression. Activates expression of NKX3-2 in the sclerotome. Activates expression of CDKN1A and CDKN2A in endothelial cells, acting as a regulator of vascular cell proliferation. While it activates CDKN1A in a DNA-dependent manner, it activates CDKN2A in a DNA-independent manner. Required for hematopoietic stem cell (HSCs) induction via its role in somitogenesis: specification of HSCs occurs via the deployment of a specific endothelial precursor population, which arises within a sub-compartment of the somite named endotome.</text>
</comment>
<comment type="subcellular location">
    <subcellularLocation>
        <location evidence="2">Nucleus</location>
    </subcellularLocation>
    <subcellularLocation>
        <location evidence="2">Cytoplasm</location>
    </subcellularLocation>
    <text evidence="2">Localizes predominantly in the nucleus.</text>
</comment>
<name>MEOX1_PANPA</name>